<sequence>MNEAVSPGALSTLFTDARTHNGWRETPVSDETLREIYALMKWGPTSANCSPTRIVFIRTAEGKERLRPALSSGNLQKTLTAPVTAIVAWDSEFYERLPQLFPHGDARSWFTSSPQLAEETAFRNSSMQAAYLIVACRALGLDTGPMSGFDRQYVDDAFFAGSTLKSNLLINIGYGDSSKLFARLPRLSFEEACGLL</sequence>
<dbReference type="EC" id="1.1.1.298" evidence="1"/>
<dbReference type="EMBL" id="AE014075">
    <property type="protein sequence ID" value="AAN79613.1"/>
    <property type="molecule type" value="Genomic_DNA"/>
</dbReference>
<dbReference type="RefSeq" id="WP_001001177.1">
    <property type="nucleotide sequence ID" value="NZ_CP051263.1"/>
</dbReference>
<dbReference type="SMR" id="Q8FJ44"/>
<dbReference type="STRING" id="199310.c1145"/>
<dbReference type="KEGG" id="ecc:c1145"/>
<dbReference type="eggNOG" id="COG0778">
    <property type="taxonomic scope" value="Bacteria"/>
</dbReference>
<dbReference type="HOGENOM" id="CLU_084441_0_0_6"/>
<dbReference type="BioCyc" id="ECOL199310:C1145-MONOMER"/>
<dbReference type="Proteomes" id="UP000001410">
    <property type="component" value="Chromosome"/>
</dbReference>
<dbReference type="GO" id="GO:0035527">
    <property type="term" value="F:3-hydroxypropionate dehydrogenase (NADP+) activity"/>
    <property type="evidence" value="ECO:0007669"/>
    <property type="project" value="UniProtKB-UniRule"/>
</dbReference>
<dbReference type="GO" id="GO:0019740">
    <property type="term" value="P:nitrogen utilization"/>
    <property type="evidence" value="ECO:0007669"/>
    <property type="project" value="UniProtKB-UniRule"/>
</dbReference>
<dbReference type="GO" id="GO:0006212">
    <property type="term" value="P:uracil catabolic process"/>
    <property type="evidence" value="ECO:0007669"/>
    <property type="project" value="UniProtKB-UniRule"/>
</dbReference>
<dbReference type="CDD" id="cd02148">
    <property type="entry name" value="RutE-like"/>
    <property type="match status" value="1"/>
</dbReference>
<dbReference type="FunFam" id="3.40.109.10:FF:000003">
    <property type="entry name" value="Probable malonic semialdehyde reductase RutE"/>
    <property type="match status" value="1"/>
</dbReference>
<dbReference type="Gene3D" id="3.40.109.10">
    <property type="entry name" value="NADH Oxidase"/>
    <property type="match status" value="1"/>
</dbReference>
<dbReference type="HAMAP" id="MF_01204">
    <property type="entry name" value="Oxidoreductase_RutE_HadB"/>
    <property type="match status" value="1"/>
</dbReference>
<dbReference type="InterPro" id="IPR029479">
    <property type="entry name" value="Nitroreductase"/>
</dbReference>
<dbReference type="InterPro" id="IPR000415">
    <property type="entry name" value="Nitroreductase-like"/>
</dbReference>
<dbReference type="InterPro" id="IPR050461">
    <property type="entry name" value="Nitroreductase_HadB/RutE"/>
</dbReference>
<dbReference type="InterPro" id="IPR023936">
    <property type="entry name" value="RutE-like"/>
</dbReference>
<dbReference type="NCBIfam" id="NF003768">
    <property type="entry name" value="PRK05365.1"/>
    <property type="match status" value="1"/>
</dbReference>
<dbReference type="PANTHER" id="PTHR43543">
    <property type="entry name" value="MALONIC SEMIALDEHYDE REDUCTASE RUTE-RELATED"/>
    <property type="match status" value="1"/>
</dbReference>
<dbReference type="PANTHER" id="PTHR43543:SF1">
    <property type="entry name" value="MALONIC SEMIALDEHYDE REDUCTASE RUTE-RELATED"/>
    <property type="match status" value="1"/>
</dbReference>
<dbReference type="Pfam" id="PF00881">
    <property type="entry name" value="Nitroreductase"/>
    <property type="match status" value="1"/>
</dbReference>
<dbReference type="SUPFAM" id="SSF55469">
    <property type="entry name" value="FMN-dependent nitroreductase-like"/>
    <property type="match status" value="1"/>
</dbReference>
<proteinExistence type="inferred from homology"/>
<gene>
    <name evidence="1" type="primary">rutE</name>
    <name type="ordered locus">c1145</name>
</gene>
<keyword id="KW-0285">Flavoprotein</keyword>
<keyword id="KW-0288">FMN</keyword>
<keyword id="KW-0520">NAD</keyword>
<keyword id="KW-0521">NADP</keyword>
<keyword id="KW-0560">Oxidoreductase</keyword>
<keyword id="KW-1185">Reference proteome</keyword>
<comment type="function">
    <text evidence="1">May reduce toxic product malonic semialdehyde to 3-hydroxypropionic acid, which is excreted.</text>
</comment>
<comment type="catalytic activity">
    <reaction evidence="1">
        <text>3-hydroxypropanoate + NADP(+) = 3-oxopropanoate + NADPH + H(+)</text>
        <dbReference type="Rhea" id="RHEA:26438"/>
        <dbReference type="ChEBI" id="CHEBI:15378"/>
        <dbReference type="ChEBI" id="CHEBI:16510"/>
        <dbReference type="ChEBI" id="CHEBI:33190"/>
        <dbReference type="ChEBI" id="CHEBI:57783"/>
        <dbReference type="ChEBI" id="CHEBI:58349"/>
        <dbReference type="EC" id="1.1.1.298"/>
    </reaction>
</comment>
<comment type="cofactor">
    <cofactor evidence="1">
        <name>FMN</name>
        <dbReference type="ChEBI" id="CHEBI:58210"/>
    </cofactor>
</comment>
<comment type="induction">
    <text evidence="1">Up-regulated by the nitrogen regulatory protein C (NtrC also called GlnG) and repressed by RutR.</text>
</comment>
<comment type="similarity">
    <text evidence="1">Belongs to the nitroreductase family. HadB/RutE subfamily.</text>
</comment>
<protein>
    <recommendedName>
        <fullName evidence="1">Probable malonic semialdehyde reductase RutE</fullName>
        <ecNumber evidence="1">1.1.1.298</ecNumber>
    </recommendedName>
</protein>
<evidence type="ECO:0000255" key="1">
    <source>
        <dbReference type="HAMAP-Rule" id="MF_01204"/>
    </source>
</evidence>
<name>RUTE_ECOL6</name>
<reference key="1">
    <citation type="journal article" date="2002" name="Proc. Natl. Acad. Sci. U.S.A.">
        <title>Extensive mosaic structure revealed by the complete genome sequence of uropathogenic Escherichia coli.</title>
        <authorList>
            <person name="Welch R.A."/>
            <person name="Burland V."/>
            <person name="Plunkett G. III"/>
            <person name="Redford P."/>
            <person name="Roesch P."/>
            <person name="Rasko D."/>
            <person name="Buckles E.L."/>
            <person name="Liou S.-R."/>
            <person name="Boutin A."/>
            <person name="Hackett J."/>
            <person name="Stroud D."/>
            <person name="Mayhew G.F."/>
            <person name="Rose D.J."/>
            <person name="Zhou S."/>
            <person name="Schwartz D.C."/>
            <person name="Perna N.T."/>
            <person name="Mobley H.L.T."/>
            <person name="Donnenberg M.S."/>
            <person name="Blattner F.R."/>
        </authorList>
    </citation>
    <scope>NUCLEOTIDE SEQUENCE [LARGE SCALE GENOMIC DNA]</scope>
    <source>
        <strain>CFT073 / ATCC 700928 / UPEC</strain>
    </source>
</reference>
<feature type="chain" id="PRO_1000066138" description="Probable malonic semialdehyde reductase RutE">
    <location>
        <begin position="1"/>
        <end position="196"/>
    </location>
</feature>
<accession>Q8FJ44</accession>
<organism>
    <name type="scientific">Escherichia coli O6:H1 (strain CFT073 / ATCC 700928 / UPEC)</name>
    <dbReference type="NCBI Taxonomy" id="199310"/>
    <lineage>
        <taxon>Bacteria</taxon>
        <taxon>Pseudomonadati</taxon>
        <taxon>Pseudomonadota</taxon>
        <taxon>Gammaproteobacteria</taxon>
        <taxon>Enterobacterales</taxon>
        <taxon>Enterobacteriaceae</taxon>
        <taxon>Escherichia</taxon>
    </lineage>
</organism>